<evidence type="ECO:0000250" key="1"/>
<evidence type="ECO:0000305" key="2"/>
<feature type="chain" id="PRO_0000147816" description="Phosphomannomutase/phosphoglucomutase">
    <location>
        <begin position="1"/>
        <end position="465"/>
    </location>
</feature>
<feature type="active site" description="Phosphoserine intermediate" evidence="1">
    <location>
        <position position="110"/>
    </location>
</feature>
<feature type="binding site" description="via phosphate group" evidence="1">
    <location>
        <position position="110"/>
    </location>
    <ligand>
        <name>Mg(2+)</name>
        <dbReference type="ChEBI" id="CHEBI:18420"/>
    </ligand>
</feature>
<feature type="binding site" evidence="1">
    <location>
        <position position="244"/>
    </location>
    <ligand>
        <name>Mg(2+)</name>
        <dbReference type="ChEBI" id="CHEBI:18420"/>
    </ligand>
</feature>
<feature type="binding site" evidence="1">
    <location>
        <position position="246"/>
    </location>
    <ligand>
        <name>Mg(2+)</name>
        <dbReference type="ChEBI" id="CHEBI:18420"/>
    </ligand>
</feature>
<feature type="binding site" evidence="1">
    <location>
        <position position="248"/>
    </location>
    <ligand>
        <name>Mg(2+)</name>
        <dbReference type="ChEBI" id="CHEBI:18420"/>
    </ligand>
</feature>
<feature type="binding site" evidence="1">
    <location>
        <position position="327"/>
    </location>
    <ligand>
        <name>substrate</name>
    </ligand>
</feature>
<feature type="binding site" evidence="1">
    <location>
        <position position="329"/>
    </location>
    <ligand>
        <name>substrate</name>
    </ligand>
</feature>
<feature type="binding site" evidence="1">
    <location>
        <position position="331"/>
    </location>
    <ligand>
        <name>substrate</name>
    </ligand>
</feature>
<feature type="site" description="Interacts with the biphosphorylated intermediate" evidence="1">
    <location>
        <position position="423"/>
    </location>
</feature>
<keyword id="KW-0016">Alginate biosynthesis</keyword>
<keyword id="KW-0413">Isomerase</keyword>
<keyword id="KW-0448">Lipopolysaccharide biosynthesis</keyword>
<keyword id="KW-0460">Magnesium</keyword>
<keyword id="KW-0479">Metal-binding</keyword>
<keyword id="KW-0511">Multifunctional enzyme</keyword>
<keyword id="KW-0597">Phosphoprotein</keyword>
<keyword id="KW-1185">Reference proteome</keyword>
<accession>Q88BD4</accession>
<dbReference type="EC" id="5.4.2.2"/>
<dbReference type="EC" id="5.4.2.8"/>
<dbReference type="EMBL" id="AE016853">
    <property type="protein sequence ID" value="AAO53637.1"/>
    <property type="molecule type" value="Genomic_DNA"/>
</dbReference>
<dbReference type="RefSeq" id="NP_789942.1">
    <property type="nucleotide sequence ID" value="NC_004578.1"/>
</dbReference>
<dbReference type="SMR" id="Q88BD4"/>
<dbReference type="STRING" id="223283.PSPTO_0083"/>
<dbReference type="KEGG" id="pst:PSPTO_0083"/>
<dbReference type="PATRIC" id="fig|223283.9.peg.87"/>
<dbReference type="eggNOG" id="COG1109">
    <property type="taxonomic scope" value="Bacteria"/>
</dbReference>
<dbReference type="HOGENOM" id="CLU_016950_9_1_6"/>
<dbReference type="OrthoDB" id="9803322at2"/>
<dbReference type="PhylomeDB" id="Q88BD4"/>
<dbReference type="UniPathway" id="UPA00030"/>
<dbReference type="UniPathway" id="UPA00126">
    <property type="reaction ID" value="UER00424"/>
</dbReference>
<dbReference type="Proteomes" id="UP000002515">
    <property type="component" value="Chromosome"/>
</dbReference>
<dbReference type="GO" id="GO:0000287">
    <property type="term" value="F:magnesium ion binding"/>
    <property type="evidence" value="ECO:0007669"/>
    <property type="project" value="InterPro"/>
</dbReference>
<dbReference type="GO" id="GO:0004614">
    <property type="term" value="F:phosphoglucomutase activity"/>
    <property type="evidence" value="ECO:0007669"/>
    <property type="project" value="UniProtKB-EC"/>
</dbReference>
<dbReference type="GO" id="GO:0004615">
    <property type="term" value="F:phosphomannomutase activity"/>
    <property type="evidence" value="ECO:0007669"/>
    <property type="project" value="UniProtKB-EC"/>
</dbReference>
<dbReference type="GO" id="GO:0042121">
    <property type="term" value="P:alginic acid biosynthetic process"/>
    <property type="evidence" value="ECO:0007669"/>
    <property type="project" value="UniProtKB-KW"/>
</dbReference>
<dbReference type="GO" id="GO:0009298">
    <property type="term" value="P:GDP-mannose biosynthetic process"/>
    <property type="evidence" value="ECO:0007669"/>
    <property type="project" value="UniProtKB-UniPathway"/>
</dbReference>
<dbReference type="GO" id="GO:0009103">
    <property type="term" value="P:lipopolysaccharide biosynthetic process"/>
    <property type="evidence" value="ECO:0007669"/>
    <property type="project" value="UniProtKB-UniPathway"/>
</dbReference>
<dbReference type="CDD" id="cd03089">
    <property type="entry name" value="PMM_PGM"/>
    <property type="match status" value="1"/>
</dbReference>
<dbReference type="FunFam" id="3.40.120.10:FF:000001">
    <property type="entry name" value="Phosphoglucosamine mutase"/>
    <property type="match status" value="1"/>
</dbReference>
<dbReference type="FunFam" id="3.40.120.10:FF:000025">
    <property type="entry name" value="Phosphomannomutase"/>
    <property type="match status" value="1"/>
</dbReference>
<dbReference type="FunFam" id="3.30.310.50:FF:000007">
    <property type="entry name" value="Phosphomannomutase/phosphoglucomutase"/>
    <property type="match status" value="1"/>
</dbReference>
<dbReference type="FunFam" id="3.40.120.10:FF:000021">
    <property type="entry name" value="Phosphomannomutase/phosphoglucomutase"/>
    <property type="match status" value="1"/>
</dbReference>
<dbReference type="Gene3D" id="3.40.120.10">
    <property type="entry name" value="Alpha-D-Glucose-1,6-Bisphosphate, subunit A, domain 3"/>
    <property type="match status" value="3"/>
</dbReference>
<dbReference type="Gene3D" id="3.30.310.50">
    <property type="entry name" value="Alpha-D-phosphohexomutase, C-terminal domain"/>
    <property type="match status" value="1"/>
</dbReference>
<dbReference type="InterPro" id="IPR005844">
    <property type="entry name" value="A-D-PHexomutase_a/b/a-I"/>
</dbReference>
<dbReference type="InterPro" id="IPR016055">
    <property type="entry name" value="A-D-PHexomutase_a/b/a-I/II/III"/>
</dbReference>
<dbReference type="InterPro" id="IPR005845">
    <property type="entry name" value="A-D-PHexomutase_a/b/a-II"/>
</dbReference>
<dbReference type="InterPro" id="IPR005846">
    <property type="entry name" value="A-D-PHexomutase_a/b/a-III"/>
</dbReference>
<dbReference type="InterPro" id="IPR005843">
    <property type="entry name" value="A-D-PHexomutase_C"/>
</dbReference>
<dbReference type="InterPro" id="IPR036900">
    <property type="entry name" value="A-D-PHexomutase_C_sf"/>
</dbReference>
<dbReference type="InterPro" id="IPR016066">
    <property type="entry name" value="A-D-PHexomutase_CS"/>
</dbReference>
<dbReference type="InterPro" id="IPR005841">
    <property type="entry name" value="Alpha-D-phosphohexomutase_SF"/>
</dbReference>
<dbReference type="PANTHER" id="PTHR43771">
    <property type="entry name" value="PHOSPHOMANNOMUTASE"/>
    <property type="match status" value="1"/>
</dbReference>
<dbReference type="PANTHER" id="PTHR43771:SF2">
    <property type="entry name" value="PHOSPHOMANNOMUTASE_PHOSPHOGLUCOMUTASE"/>
    <property type="match status" value="1"/>
</dbReference>
<dbReference type="Pfam" id="PF02878">
    <property type="entry name" value="PGM_PMM_I"/>
    <property type="match status" value="1"/>
</dbReference>
<dbReference type="Pfam" id="PF02879">
    <property type="entry name" value="PGM_PMM_II"/>
    <property type="match status" value="1"/>
</dbReference>
<dbReference type="Pfam" id="PF02880">
    <property type="entry name" value="PGM_PMM_III"/>
    <property type="match status" value="1"/>
</dbReference>
<dbReference type="Pfam" id="PF00408">
    <property type="entry name" value="PGM_PMM_IV"/>
    <property type="match status" value="1"/>
</dbReference>
<dbReference type="PRINTS" id="PR00509">
    <property type="entry name" value="PGMPMM"/>
</dbReference>
<dbReference type="SUPFAM" id="SSF55957">
    <property type="entry name" value="Phosphoglucomutase, C-terminal domain"/>
    <property type="match status" value="1"/>
</dbReference>
<dbReference type="SUPFAM" id="SSF53738">
    <property type="entry name" value="Phosphoglucomutase, first 3 domains"/>
    <property type="match status" value="3"/>
</dbReference>
<dbReference type="PROSITE" id="PS00710">
    <property type="entry name" value="PGM_PMM"/>
    <property type="match status" value="1"/>
</dbReference>
<gene>
    <name type="primary">algC</name>
    <name type="ordered locus">PSPTO_0083</name>
</gene>
<proteinExistence type="inferred from homology"/>
<name>ALGC_PSESM</name>
<organism>
    <name type="scientific">Pseudomonas syringae pv. tomato (strain ATCC BAA-871 / DC3000)</name>
    <dbReference type="NCBI Taxonomy" id="223283"/>
    <lineage>
        <taxon>Bacteria</taxon>
        <taxon>Pseudomonadati</taxon>
        <taxon>Pseudomonadota</taxon>
        <taxon>Gammaproteobacteria</taxon>
        <taxon>Pseudomonadales</taxon>
        <taxon>Pseudomonadaceae</taxon>
        <taxon>Pseudomonas</taxon>
    </lineage>
</organism>
<sequence>MNSPASVAPILPDTIFRAYDIRGVVEDTLNAETAYWIGRAIGSESLAQNEPNVSVGRDGRLSGPELVQQLIQGLHDSGCHVSDVGLVPTPALYYAANVLAGKTGVMLTGSHNPKDYNGFKIVIAGDTLANEQIQALHERIKTNNLTSQKGSITQVNILDRYFKQIKDDIVMARKLKVVVDCGNGAAGVIAPQLIEALGCEVISLFAEVDGNFPNHHPDPGKLENLQDLIAKVKETGADLGLAFDGDGDRVGVVTNAGNVVYPDRLLMLFALDVLKRNPGADIIFDVKCTRRLTPLISEHGGRPVMWKTGHSLIKKEMKKSGALLAGEMSGHIFFKERWFGFDDGIYSAARLLEILSQEPANAEDLFETFPNDISTPEINIKVTDVTKFSIIEALEKDAQWGDAKLTTIDGVRVDYPKGWGLVRASNTTPVLVLRFEAETQAELERIQGVFHAELKKVAPDLDLPF</sequence>
<reference key="1">
    <citation type="journal article" date="2003" name="Proc. Natl. Acad. Sci. U.S.A.">
        <title>The complete genome sequence of the Arabidopsis and tomato pathogen Pseudomonas syringae pv. tomato DC3000.</title>
        <authorList>
            <person name="Buell C.R."/>
            <person name="Joardar V."/>
            <person name="Lindeberg M."/>
            <person name="Selengut J."/>
            <person name="Paulsen I.T."/>
            <person name="Gwinn M.L."/>
            <person name="Dodson R.J."/>
            <person name="DeBoy R.T."/>
            <person name="Durkin A.S."/>
            <person name="Kolonay J.F."/>
            <person name="Madupu R."/>
            <person name="Daugherty S.C."/>
            <person name="Brinkac L.M."/>
            <person name="Beanan M.J."/>
            <person name="Haft D.H."/>
            <person name="Nelson W.C."/>
            <person name="Davidsen T.M."/>
            <person name="Zafar N."/>
            <person name="Zhou L."/>
            <person name="Liu J."/>
            <person name="Yuan Q."/>
            <person name="Khouri H.M."/>
            <person name="Fedorova N.B."/>
            <person name="Tran B."/>
            <person name="Russell D."/>
            <person name="Berry K.J."/>
            <person name="Utterback T.R."/>
            <person name="Van Aken S.E."/>
            <person name="Feldblyum T.V."/>
            <person name="D'Ascenzo M."/>
            <person name="Deng W.-L."/>
            <person name="Ramos A.R."/>
            <person name="Alfano J.R."/>
            <person name="Cartinhour S."/>
            <person name="Chatterjee A.K."/>
            <person name="Delaney T.P."/>
            <person name="Lazarowitz S.G."/>
            <person name="Martin G.B."/>
            <person name="Schneider D.J."/>
            <person name="Tang X."/>
            <person name="Bender C.L."/>
            <person name="White O."/>
            <person name="Fraser C.M."/>
            <person name="Collmer A."/>
        </authorList>
    </citation>
    <scope>NUCLEOTIDE SEQUENCE [LARGE SCALE GENOMIC DNA]</scope>
    <source>
        <strain>ATCC BAA-871 / DC3000</strain>
    </source>
</reference>
<protein>
    <recommendedName>
        <fullName>Phosphomannomutase/phosphoglucomutase</fullName>
        <shortName>PMM / PGM</shortName>
        <ecNumber>5.4.2.2</ecNumber>
        <ecNumber>5.4.2.8</ecNumber>
    </recommendedName>
</protein>
<comment type="function">
    <text evidence="1">The phosphomannomutase activity produces a precursor for alginate polymerization. The alginate layer causes a mucoid phenotype and provides a protective barrier against host immune defenses and antibiotics. Also involved in core-LPS biosynthesis due to its phosphoglucomutase activity. Essential for biofilm production (By similarity).</text>
</comment>
<comment type="catalytic activity">
    <reaction>
        <text>alpha-D-mannose 1-phosphate = D-mannose 6-phosphate</text>
        <dbReference type="Rhea" id="RHEA:11140"/>
        <dbReference type="ChEBI" id="CHEBI:58409"/>
        <dbReference type="ChEBI" id="CHEBI:58735"/>
        <dbReference type="EC" id="5.4.2.8"/>
    </reaction>
</comment>
<comment type="catalytic activity">
    <reaction>
        <text>alpha-D-glucose 1-phosphate = alpha-D-glucose 6-phosphate</text>
        <dbReference type="Rhea" id="RHEA:23536"/>
        <dbReference type="ChEBI" id="CHEBI:58225"/>
        <dbReference type="ChEBI" id="CHEBI:58601"/>
        <dbReference type="EC" id="5.4.2.2"/>
    </reaction>
</comment>
<comment type="cofactor">
    <cofactor evidence="1">
        <name>Mg(2+)</name>
        <dbReference type="ChEBI" id="CHEBI:18420"/>
    </cofactor>
    <text evidence="1">Binds 1 Mg(2+) ion per subunit.</text>
</comment>
<comment type="pathway">
    <text>Nucleotide-sugar biosynthesis; GDP-alpha-D-mannose biosynthesis; alpha-D-mannose 1-phosphate from D-fructose 6-phosphate: step 2/2.</text>
</comment>
<comment type="pathway">
    <text>Bacterial outer membrane biogenesis; lipopolysaccharide biosynthesis.</text>
</comment>
<comment type="subunit">
    <text evidence="1">Monomer.</text>
</comment>
<comment type="similarity">
    <text evidence="2">Belongs to the phosphohexose mutase family.</text>
</comment>